<proteinExistence type="inferred from homology"/>
<protein>
    <recommendedName>
        <fullName evidence="1">Protein GrpE</fullName>
    </recommendedName>
    <alternativeName>
        <fullName evidence="1">HSP-70 cofactor</fullName>
    </alternativeName>
</protein>
<feature type="chain" id="PRO_1000137573" description="Protein GrpE">
    <location>
        <begin position="1"/>
        <end position="189"/>
    </location>
</feature>
<feature type="region of interest" description="Disordered" evidence="2">
    <location>
        <begin position="1"/>
        <end position="36"/>
    </location>
</feature>
<feature type="compositionally biased region" description="Basic residues" evidence="2">
    <location>
        <begin position="1"/>
        <end position="12"/>
    </location>
</feature>
<feature type="compositionally biased region" description="Low complexity" evidence="2">
    <location>
        <begin position="20"/>
        <end position="34"/>
    </location>
</feature>
<name>GRPE_GEOMG</name>
<comment type="function">
    <text evidence="1">Participates actively in the response to hyperosmotic and heat shock by preventing the aggregation of stress-denatured proteins, in association with DnaK and GrpE. It is the nucleotide exchange factor for DnaK and may function as a thermosensor. Unfolded proteins bind initially to DnaJ; upon interaction with the DnaJ-bound protein, DnaK hydrolyzes its bound ATP, resulting in the formation of a stable complex. GrpE releases ADP from DnaK; ATP binding to DnaK triggers the release of the substrate protein, thus completing the reaction cycle. Several rounds of ATP-dependent interactions between DnaJ, DnaK and GrpE are required for fully efficient folding.</text>
</comment>
<comment type="subunit">
    <text evidence="1">Homodimer.</text>
</comment>
<comment type="subcellular location">
    <subcellularLocation>
        <location evidence="1">Cytoplasm</location>
    </subcellularLocation>
</comment>
<comment type="similarity">
    <text evidence="1">Belongs to the GrpE family.</text>
</comment>
<dbReference type="EMBL" id="CP000148">
    <property type="protein sequence ID" value="ABB33738.1"/>
    <property type="molecule type" value="Genomic_DNA"/>
</dbReference>
<dbReference type="RefSeq" id="WP_004513689.1">
    <property type="nucleotide sequence ID" value="NC_007517.1"/>
</dbReference>
<dbReference type="SMR" id="Q39PT6"/>
<dbReference type="STRING" id="269799.Gmet_3533"/>
<dbReference type="KEGG" id="gme:Gmet_3533"/>
<dbReference type="eggNOG" id="COG0576">
    <property type="taxonomic scope" value="Bacteria"/>
</dbReference>
<dbReference type="HOGENOM" id="CLU_057217_6_0_7"/>
<dbReference type="Proteomes" id="UP000007073">
    <property type="component" value="Chromosome"/>
</dbReference>
<dbReference type="GO" id="GO:0005829">
    <property type="term" value="C:cytosol"/>
    <property type="evidence" value="ECO:0007669"/>
    <property type="project" value="TreeGrafter"/>
</dbReference>
<dbReference type="GO" id="GO:0000774">
    <property type="term" value="F:adenyl-nucleotide exchange factor activity"/>
    <property type="evidence" value="ECO:0007669"/>
    <property type="project" value="InterPro"/>
</dbReference>
<dbReference type="GO" id="GO:0042803">
    <property type="term" value="F:protein homodimerization activity"/>
    <property type="evidence" value="ECO:0007669"/>
    <property type="project" value="InterPro"/>
</dbReference>
<dbReference type="GO" id="GO:0051087">
    <property type="term" value="F:protein-folding chaperone binding"/>
    <property type="evidence" value="ECO:0007669"/>
    <property type="project" value="InterPro"/>
</dbReference>
<dbReference type="GO" id="GO:0051082">
    <property type="term" value="F:unfolded protein binding"/>
    <property type="evidence" value="ECO:0007669"/>
    <property type="project" value="TreeGrafter"/>
</dbReference>
<dbReference type="GO" id="GO:0006457">
    <property type="term" value="P:protein folding"/>
    <property type="evidence" value="ECO:0007669"/>
    <property type="project" value="InterPro"/>
</dbReference>
<dbReference type="CDD" id="cd00446">
    <property type="entry name" value="GrpE"/>
    <property type="match status" value="1"/>
</dbReference>
<dbReference type="FunFam" id="2.30.22.10:FF:000001">
    <property type="entry name" value="Protein GrpE"/>
    <property type="match status" value="1"/>
</dbReference>
<dbReference type="Gene3D" id="3.90.20.20">
    <property type="match status" value="1"/>
</dbReference>
<dbReference type="Gene3D" id="2.30.22.10">
    <property type="entry name" value="Head domain of nucleotide exchange factor GrpE"/>
    <property type="match status" value="1"/>
</dbReference>
<dbReference type="HAMAP" id="MF_01151">
    <property type="entry name" value="GrpE"/>
    <property type="match status" value="1"/>
</dbReference>
<dbReference type="InterPro" id="IPR000740">
    <property type="entry name" value="GrpE"/>
</dbReference>
<dbReference type="InterPro" id="IPR013805">
    <property type="entry name" value="GrpE_coiled_coil"/>
</dbReference>
<dbReference type="InterPro" id="IPR009012">
    <property type="entry name" value="GrpE_head"/>
</dbReference>
<dbReference type="NCBIfam" id="NF010738">
    <property type="entry name" value="PRK14140.1"/>
    <property type="match status" value="1"/>
</dbReference>
<dbReference type="NCBIfam" id="NF010748">
    <property type="entry name" value="PRK14150.1"/>
    <property type="match status" value="1"/>
</dbReference>
<dbReference type="NCBIfam" id="NF010755">
    <property type="entry name" value="PRK14158.1"/>
    <property type="match status" value="1"/>
</dbReference>
<dbReference type="PANTHER" id="PTHR21237">
    <property type="entry name" value="GRPE PROTEIN"/>
    <property type="match status" value="1"/>
</dbReference>
<dbReference type="PANTHER" id="PTHR21237:SF23">
    <property type="entry name" value="GRPE PROTEIN HOMOLOG, MITOCHONDRIAL"/>
    <property type="match status" value="1"/>
</dbReference>
<dbReference type="Pfam" id="PF01025">
    <property type="entry name" value="GrpE"/>
    <property type="match status" value="1"/>
</dbReference>
<dbReference type="PRINTS" id="PR00773">
    <property type="entry name" value="GRPEPROTEIN"/>
</dbReference>
<dbReference type="SUPFAM" id="SSF58014">
    <property type="entry name" value="Coiled-coil domain of nucleotide exchange factor GrpE"/>
    <property type="match status" value="1"/>
</dbReference>
<dbReference type="SUPFAM" id="SSF51064">
    <property type="entry name" value="Head domain of nucleotide exchange factor GrpE"/>
    <property type="match status" value="1"/>
</dbReference>
<dbReference type="PROSITE" id="PS01071">
    <property type="entry name" value="GRPE"/>
    <property type="match status" value="1"/>
</dbReference>
<accession>Q39PT6</accession>
<sequence>MDKKKHGSHAGAHHTDEPAAETVAPAAEGAPAAADRVKELEEALAAKEAEAAANWDKFVRERADLENYRKRTQKEKEELLKYGNESLIVEILPVVDNMERALDHSDDDSASAVIEGVRMTLNMLLSTLKKFGVTVVEAEKGTPFDPAVHQAMCQVENTDVPANSVVEIFQKGYLLNERLIRPAMVSVSK</sequence>
<evidence type="ECO:0000255" key="1">
    <source>
        <dbReference type="HAMAP-Rule" id="MF_01151"/>
    </source>
</evidence>
<evidence type="ECO:0000256" key="2">
    <source>
        <dbReference type="SAM" id="MobiDB-lite"/>
    </source>
</evidence>
<reference key="1">
    <citation type="journal article" date="2009" name="BMC Microbiol.">
        <title>The genome sequence of Geobacter metallireducens: features of metabolism, physiology and regulation common and dissimilar to Geobacter sulfurreducens.</title>
        <authorList>
            <person name="Aklujkar M."/>
            <person name="Krushkal J."/>
            <person name="DiBartolo G."/>
            <person name="Lapidus A."/>
            <person name="Land M.L."/>
            <person name="Lovley D.R."/>
        </authorList>
    </citation>
    <scope>NUCLEOTIDE SEQUENCE [LARGE SCALE GENOMIC DNA]</scope>
    <source>
        <strain>ATCC 53774 / DSM 7210 / GS-15</strain>
    </source>
</reference>
<organism>
    <name type="scientific">Geobacter metallireducens (strain ATCC 53774 / DSM 7210 / GS-15)</name>
    <dbReference type="NCBI Taxonomy" id="269799"/>
    <lineage>
        <taxon>Bacteria</taxon>
        <taxon>Pseudomonadati</taxon>
        <taxon>Thermodesulfobacteriota</taxon>
        <taxon>Desulfuromonadia</taxon>
        <taxon>Geobacterales</taxon>
        <taxon>Geobacteraceae</taxon>
        <taxon>Geobacter</taxon>
    </lineage>
</organism>
<gene>
    <name evidence="1" type="primary">grpE</name>
    <name type="ordered locus">Gmet_3533</name>
</gene>
<keyword id="KW-0143">Chaperone</keyword>
<keyword id="KW-0963">Cytoplasm</keyword>
<keyword id="KW-1185">Reference proteome</keyword>
<keyword id="KW-0346">Stress response</keyword>